<organism>
    <name type="scientific">Trichodesmium erythraeum (strain IMS101)</name>
    <dbReference type="NCBI Taxonomy" id="203124"/>
    <lineage>
        <taxon>Bacteria</taxon>
        <taxon>Bacillati</taxon>
        <taxon>Cyanobacteriota</taxon>
        <taxon>Cyanophyceae</taxon>
        <taxon>Oscillatoriophycideae</taxon>
        <taxon>Oscillatoriales</taxon>
        <taxon>Microcoleaceae</taxon>
        <taxon>Trichodesmium</taxon>
    </lineage>
</organism>
<accession>Q119C3</accession>
<gene>
    <name evidence="1" type="primary">dtd</name>
    <name type="ordered locus">Tery_0442</name>
</gene>
<evidence type="ECO:0000255" key="1">
    <source>
        <dbReference type="HAMAP-Rule" id="MF_00518"/>
    </source>
</evidence>
<dbReference type="EC" id="3.1.1.96" evidence="1"/>
<dbReference type="EMBL" id="CP000393">
    <property type="protein sequence ID" value="ABG49901.1"/>
    <property type="molecule type" value="Genomic_DNA"/>
</dbReference>
<dbReference type="RefSeq" id="WP_011610297.1">
    <property type="nucleotide sequence ID" value="NC_008312.1"/>
</dbReference>
<dbReference type="SMR" id="Q119C3"/>
<dbReference type="STRING" id="203124.Tery_0442"/>
<dbReference type="KEGG" id="ter:Tery_0442"/>
<dbReference type="eggNOG" id="COG1490">
    <property type="taxonomic scope" value="Bacteria"/>
</dbReference>
<dbReference type="HOGENOM" id="CLU_076901_1_0_3"/>
<dbReference type="OrthoDB" id="9801395at2"/>
<dbReference type="GO" id="GO:0005737">
    <property type="term" value="C:cytoplasm"/>
    <property type="evidence" value="ECO:0007669"/>
    <property type="project" value="UniProtKB-SubCell"/>
</dbReference>
<dbReference type="GO" id="GO:0051500">
    <property type="term" value="F:D-tyrosyl-tRNA(Tyr) deacylase activity"/>
    <property type="evidence" value="ECO:0007669"/>
    <property type="project" value="TreeGrafter"/>
</dbReference>
<dbReference type="GO" id="GO:0106026">
    <property type="term" value="F:Gly-tRNA(Ala) deacylase activity"/>
    <property type="evidence" value="ECO:0007669"/>
    <property type="project" value="UniProtKB-UniRule"/>
</dbReference>
<dbReference type="GO" id="GO:0043908">
    <property type="term" value="F:Ser(Gly)-tRNA(Ala) hydrolase activity"/>
    <property type="evidence" value="ECO:0007669"/>
    <property type="project" value="UniProtKB-UniRule"/>
</dbReference>
<dbReference type="GO" id="GO:0000049">
    <property type="term" value="F:tRNA binding"/>
    <property type="evidence" value="ECO:0007669"/>
    <property type="project" value="UniProtKB-UniRule"/>
</dbReference>
<dbReference type="GO" id="GO:0019478">
    <property type="term" value="P:D-amino acid catabolic process"/>
    <property type="evidence" value="ECO:0007669"/>
    <property type="project" value="UniProtKB-UniRule"/>
</dbReference>
<dbReference type="CDD" id="cd00563">
    <property type="entry name" value="Dtyr_deacylase"/>
    <property type="match status" value="1"/>
</dbReference>
<dbReference type="FunFam" id="3.50.80.10:FF:000001">
    <property type="entry name" value="D-aminoacyl-tRNA deacylase"/>
    <property type="match status" value="1"/>
</dbReference>
<dbReference type="Gene3D" id="3.50.80.10">
    <property type="entry name" value="D-tyrosyl-tRNA(Tyr) deacylase"/>
    <property type="match status" value="1"/>
</dbReference>
<dbReference type="HAMAP" id="MF_00518">
    <property type="entry name" value="Deacylase_Dtd"/>
    <property type="match status" value="1"/>
</dbReference>
<dbReference type="InterPro" id="IPR003732">
    <property type="entry name" value="Daa-tRNA_deacyls_DTD"/>
</dbReference>
<dbReference type="InterPro" id="IPR023509">
    <property type="entry name" value="DTD-like_sf"/>
</dbReference>
<dbReference type="NCBIfam" id="TIGR00256">
    <property type="entry name" value="D-aminoacyl-tRNA deacylase"/>
    <property type="match status" value="1"/>
</dbReference>
<dbReference type="PANTHER" id="PTHR10472:SF5">
    <property type="entry name" value="D-AMINOACYL-TRNA DEACYLASE 1"/>
    <property type="match status" value="1"/>
</dbReference>
<dbReference type="PANTHER" id="PTHR10472">
    <property type="entry name" value="D-TYROSYL-TRNA TYR DEACYLASE"/>
    <property type="match status" value="1"/>
</dbReference>
<dbReference type="Pfam" id="PF02580">
    <property type="entry name" value="Tyr_Deacylase"/>
    <property type="match status" value="1"/>
</dbReference>
<dbReference type="SUPFAM" id="SSF69500">
    <property type="entry name" value="DTD-like"/>
    <property type="match status" value="1"/>
</dbReference>
<name>DTD_TRIEI</name>
<feature type="chain" id="PRO_1000050903" description="D-aminoacyl-tRNA deacylase">
    <location>
        <begin position="1"/>
        <end position="153"/>
    </location>
</feature>
<feature type="short sequence motif" description="Gly-cisPro motif, important for rejection of L-amino acids" evidence="1">
    <location>
        <begin position="140"/>
        <end position="141"/>
    </location>
</feature>
<keyword id="KW-0963">Cytoplasm</keyword>
<keyword id="KW-0378">Hydrolase</keyword>
<keyword id="KW-0694">RNA-binding</keyword>
<keyword id="KW-0820">tRNA-binding</keyword>
<sequence>MRVVIQRVNFSQVKVNEEIVGKIGKGLNLLVAISTTDTEAEIDWIVRKCLDLRLFPDPDSNNNFWEKSVKDIDGELLIVSQFTLYGDCRKGRRPSFDNSASPEVAKQLYQLFVEKLKLSGLKVATGIFGAMMQVEIDNDGPVTFLLEKEANNK</sequence>
<comment type="function">
    <text evidence="1">An aminoacyl-tRNA editing enzyme that deacylates mischarged D-aminoacyl-tRNAs. Also deacylates mischarged glycyl-tRNA(Ala), protecting cells against glycine mischarging by AlaRS. Acts via tRNA-based rather than protein-based catalysis; rejects L-amino acids rather than detecting D-amino acids in the active site. By recycling D-aminoacyl-tRNA to D-amino acids and free tRNA molecules, this enzyme counteracts the toxicity associated with the formation of D-aminoacyl-tRNA entities in vivo and helps enforce protein L-homochirality.</text>
</comment>
<comment type="catalytic activity">
    <reaction evidence="1">
        <text>glycyl-tRNA(Ala) + H2O = tRNA(Ala) + glycine + H(+)</text>
        <dbReference type="Rhea" id="RHEA:53744"/>
        <dbReference type="Rhea" id="RHEA-COMP:9657"/>
        <dbReference type="Rhea" id="RHEA-COMP:13640"/>
        <dbReference type="ChEBI" id="CHEBI:15377"/>
        <dbReference type="ChEBI" id="CHEBI:15378"/>
        <dbReference type="ChEBI" id="CHEBI:57305"/>
        <dbReference type="ChEBI" id="CHEBI:78442"/>
        <dbReference type="ChEBI" id="CHEBI:78522"/>
        <dbReference type="EC" id="3.1.1.96"/>
    </reaction>
</comment>
<comment type="catalytic activity">
    <reaction evidence="1">
        <text>a D-aminoacyl-tRNA + H2O = a tRNA + a D-alpha-amino acid + H(+)</text>
        <dbReference type="Rhea" id="RHEA:13953"/>
        <dbReference type="Rhea" id="RHEA-COMP:10123"/>
        <dbReference type="Rhea" id="RHEA-COMP:10124"/>
        <dbReference type="ChEBI" id="CHEBI:15377"/>
        <dbReference type="ChEBI" id="CHEBI:15378"/>
        <dbReference type="ChEBI" id="CHEBI:59871"/>
        <dbReference type="ChEBI" id="CHEBI:78442"/>
        <dbReference type="ChEBI" id="CHEBI:79333"/>
        <dbReference type="EC" id="3.1.1.96"/>
    </reaction>
</comment>
<comment type="subunit">
    <text evidence="1">Homodimer.</text>
</comment>
<comment type="subcellular location">
    <subcellularLocation>
        <location evidence="1">Cytoplasm</location>
    </subcellularLocation>
</comment>
<comment type="domain">
    <text evidence="1">A Gly-cisPro motif from one monomer fits into the active site of the other monomer to allow specific chiral rejection of L-amino acids.</text>
</comment>
<comment type="similarity">
    <text evidence="1">Belongs to the DTD family.</text>
</comment>
<protein>
    <recommendedName>
        <fullName evidence="1">D-aminoacyl-tRNA deacylase</fullName>
        <shortName evidence="1">DTD</shortName>
        <ecNumber evidence="1">3.1.1.96</ecNumber>
    </recommendedName>
    <alternativeName>
        <fullName evidence="1">Gly-tRNA(Ala) deacylase</fullName>
    </alternativeName>
</protein>
<reference key="1">
    <citation type="journal article" date="2015" name="Proc. Natl. Acad. Sci. U.S.A.">
        <title>Trichodesmium genome maintains abundant, widespread noncoding DNA in situ, despite oligotrophic lifestyle.</title>
        <authorList>
            <person name="Walworth N."/>
            <person name="Pfreundt U."/>
            <person name="Nelson W.C."/>
            <person name="Mincer T."/>
            <person name="Heidelberg J.F."/>
            <person name="Fu F."/>
            <person name="Waterbury J.B."/>
            <person name="Glavina del Rio T."/>
            <person name="Goodwin L."/>
            <person name="Kyrpides N.C."/>
            <person name="Land M.L."/>
            <person name="Woyke T."/>
            <person name="Hutchins D.A."/>
            <person name="Hess W.R."/>
            <person name="Webb E.A."/>
        </authorList>
    </citation>
    <scope>NUCLEOTIDE SEQUENCE [LARGE SCALE GENOMIC DNA]</scope>
    <source>
        <strain>IMS101</strain>
    </source>
</reference>
<proteinExistence type="inferred from homology"/>